<proteinExistence type="inferred from homology"/>
<name>KAIA_PICP2</name>
<protein>
    <recommendedName>
        <fullName evidence="5">Circadian clock oscillator protein KaiA</fullName>
    </recommendedName>
</protein>
<reference key="1">
    <citation type="journal article" date="2004" name="Nat. Struct. Mol. Biol.">
        <title>Crystal structure of the C-terminal clock-oscillator domain of the cyanobacterial KaiA protein.</title>
        <authorList>
            <person name="Uzumaki T."/>
            <person name="Fujita M."/>
            <person name="Nakatsu T."/>
            <person name="Hayashi F."/>
            <person name="Shibata H."/>
            <person name="Itoh N."/>
            <person name="Kato H."/>
            <person name="Ishiura M."/>
        </authorList>
    </citation>
    <scope>NUCLEOTIDE SEQUENCE [GENOMIC DNA]</scope>
    <source>
        <strain>ATCC 27264 / PCC 7002 / PR-6</strain>
    </source>
</reference>
<reference key="2">
    <citation type="submission" date="2008-02" db="EMBL/GenBank/DDBJ databases">
        <title>Complete sequence of Synechococcus sp. PCC 7002.</title>
        <authorList>
            <person name="Li T."/>
            <person name="Zhao J."/>
            <person name="Zhao C."/>
            <person name="Liu Z."/>
            <person name="Zhao F."/>
            <person name="Marquardt J."/>
            <person name="Nomura C.T."/>
            <person name="Persson S."/>
            <person name="Detter J.C."/>
            <person name="Richardson P.M."/>
            <person name="Lanz C."/>
            <person name="Schuster S.C."/>
            <person name="Wang J."/>
            <person name="Li S."/>
            <person name="Huang X."/>
            <person name="Cai T."/>
            <person name="Yu Z."/>
            <person name="Luo J."/>
            <person name="Zhao J."/>
            <person name="Bryant D.A."/>
        </authorList>
    </citation>
    <scope>NUCLEOTIDE SEQUENCE [LARGE SCALE GENOMIC DNA]</scope>
    <source>
        <strain>ATCC 27264 / PCC 7002 / PR-6</strain>
    </source>
</reference>
<keyword id="KW-0090">Biological rhythms</keyword>
<keyword id="KW-1185">Reference proteome</keyword>
<feature type="chain" id="PRO_0000217870" description="Circadian clock oscillator protein KaiA">
    <location>
        <begin position="1"/>
        <end position="299"/>
    </location>
</feature>
<feature type="domain" description="KaiA N-terminal" evidence="3">
    <location>
        <begin position="1"/>
        <end position="169"/>
    </location>
</feature>
<feature type="domain" description="KaiA C-terminal" evidence="4">
    <location>
        <begin position="179"/>
        <end position="287"/>
    </location>
</feature>
<feature type="region of interest" description="PsR domain, binds oxidized quinones" evidence="1">
    <location>
        <begin position="3"/>
        <end position="135"/>
    </location>
</feature>
<feature type="region of interest" description="Flexible linker" evidence="1">
    <location>
        <begin position="170"/>
        <end position="178"/>
    </location>
</feature>
<feature type="sequence conflict" description="In Ref. 1; BAD21211." evidence="6" ref="1">
    <original>L</original>
    <variation>F</variation>
    <location>
        <position position="253"/>
    </location>
</feature>
<feature type="sequence conflict" description="In Ref. 1; BAD21211." evidence="6" ref="1">
    <original>L</original>
    <variation>I</variation>
    <location>
        <position position="264"/>
    </location>
</feature>
<gene>
    <name evidence="5" type="primary">kaiA</name>
    <name type="ordered locus">SYNPCC7002_A0289</name>
</gene>
<organism>
    <name type="scientific">Picosynechococcus sp. (strain ATCC 27264 / PCC 7002 / PR-6)</name>
    <name type="common">Agmenellum quadruplicatum</name>
    <dbReference type="NCBI Taxonomy" id="32049"/>
    <lineage>
        <taxon>Bacteria</taxon>
        <taxon>Bacillati</taxon>
        <taxon>Cyanobacteriota</taxon>
        <taxon>Cyanophyceae</taxon>
        <taxon>Oscillatoriophycideae</taxon>
        <taxon>Chroococcales</taxon>
        <taxon>Geminocystaceae</taxon>
        <taxon>Picosynechococcus</taxon>
    </lineage>
</organism>
<dbReference type="EMBL" id="AB120711">
    <property type="protein sequence ID" value="BAD21211.1"/>
    <property type="status" value="ALT_FRAME"/>
    <property type="molecule type" value="Genomic_DNA"/>
</dbReference>
<dbReference type="EMBL" id="CP000951">
    <property type="protein sequence ID" value="ACA98299.1"/>
    <property type="molecule type" value="Genomic_DNA"/>
</dbReference>
<dbReference type="RefSeq" id="WP_012305923.1">
    <property type="nucleotide sequence ID" value="NZ_JAHHPU010000004.1"/>
</dbReference>
<dbReference type="SMR" id="Q6L8L7"/>
<dbReference type="STRING" id="32049.SYNPCC7002_A0289"/>
<dbReference type="KEGG" id="syp:SYNPCC7002_A0289"/>
<dbReference type="eggNOG" id="ENOG502Z8HQ">
    <property type="taxonomic scope" value="Bacteria"/>
</dbReference>
<dbReference type="HOGENOM" id="CLU_911234_0_0_3"/>
<dbReference type="Proteomes" id="UP000001688">
    <property type="component" value="Chromosome"/>
</dbReference>
<dbReference type="GO" id="GO:0007623">
    <property type="term" value="P:circadian rhythm"/>
    <property type="evidence" value="ECO:0007669"/>
    <property type="project" value="InterPro"/>
</dbReference>
<dbReference type="Gene3D" id="3.40.50.2300">
    <property type="match status" value="1"/>
</dbReference>
<dbReference type="Gene3D" id="1.10.1240.30">
    <property type="entry name" value="KaiA/RbsU domain"/>
    <property type="match status" value="1"/>
</dbReference>
<dbReference type="InterPro" id="IPR011006">
    <property type="entry name" value="CheY-like_superfamily"/>
</dbReference>
<dbReference type="InterPro" id="IPR011648">
    <property type="entry name" value="Circadian_clock_KaiA"/>
</dbReference>
<dbReference type="InterPro" id="IPR020844">
    <property type="entry name" value="Circadian_clock_KaiA_N"/>
</dbReference>
<dbReference type="InterPro" id="IPR020856">
    <property type="entry name" value="Circadian_clock_protein_KaiA_C"/>
</dbReference>
<dbReference type="InterPro" id="IPR017944">
    <property type="entry name" value="KaiA/RbsU_helical_domain_sf"/>
</dbReference>
<dbReference type="Pfam" id="PF07688">
    <property type="entry name" value="KaiA"/>
    <property type="match status" value="1"/>
</dbReference>
<dbReference type="Pfam" id="PF21714">
    <property type="entry name" value="KaiA_N"/>
    <property type="match status" value="1"/>
</dbReference>
<dbReference type="SMART" id="SM01247">
    <property type="entry name" value="KaiA"/>
    <property type="match status" value="1"/>
</dbReference>
<dbReference type="SUPFAM" id="SSF52172">
    <property type="entry name" value="CheY-like"/>
    <property type="match status" value="1"/>
</dbReference>
<dbReference type="SUPFAM" id="SSF101215">
    <property type="entry name" value="KaiA/RbsU domain"/>
    <property type="match status" value="1"/>
</dbReference>
<dbReference type="PROSITE" id="PS51431">
    <property type="entry name" value="KAIA_C"/>
    <property type="match status" value="1"/>
</dbReference>
<dbReference type="PROSITE" id="PS51430">
    <property type="entry name" value="KAIA_N"/>
    <property type="match status" value="1"/>
</dbReference>
<accession>Q6L8L7</accession>
<accession>B1XMW2</accession>
<evidence type="ECO:0000250" key="1">
    <source>
        <dbReference type="UniProtKB" id="Q79PF6"/>
    </source>
</evidence>
<evidence type="ECO:0000250" key="2">
    <source>
        <dbReference type="UniProtKB" id="Q79V62"/>
    </source>
</evidence>
<evidence type="ECO:0000255" key="3">
    <source>
        <dbReference type="PROSITE-ProRule" id="PRU00760"/>
    </source>
</evidence>
<evidence type="ECO:0000255" key="4">
    <source>
        <dbReference type="PROSITE-ProRule" id="PRU00761"/>
    </source>
</evidence>
<evidence type="ECO:0000303" key="5">
    <source>
    </source>
</evidence>
<evidence type="ECO:0000305" key="6"/>
<comment type="function">
    <text evidence="1">Key component of the KaiABC oscillator complex, which constitutes the main circadian regulator in cyanobacteria. Complex composition changes during the circadian cycle to control KaiC phosphorylation. KaiA stimulates KaiC autophosphorylation, while KaiB sequesters KaiA, leading to KaiC autodephosphorylation. KaiA binding to the KaiC CII domain during the subjective day yields KaiA(2-4):KaiC(6) complexes which stimulate KaiC autophosphorylation. Phospho-Ser-431 KaiC accumulation triggers binding of KaiB during the subjective night to form the KaiB(6):KaiC(6) complex, leading to changes in the output regulators CikA and SasA. KaiB(6):KaiC(6) formation exposes a site for KaiA binding on KaiB that sequesters KaiA from KaiC's CII domain, making the KaiC(6):KaiB(6):KaiA(12) complex resulting in KaiC autodephosphorylation. Complete dephosphorylation of KaiC leads to dissociation of KaiA(2):KaiB(1), completing 1 cycle of the Kai oscillator.</text>
</comment>
<comment type="function">
    <text evidence="1">Binds oxidized quinones via the N-terminal PsR domain, allowing it to sense redox changes and possibly mediate clock input.</text>
</comment>
<comment type="subunit">
    <text evidence="1">Homodimer. The KaiABC complex composition changes during the circadian cycle to control KaiC phosphorylation. Complexes KaiC(6), KaiA(2-4):KaiC(6), KaiB(6):KaiC(6) and KaiC(6):KaiB(6):KaiA(12) are among the most important forms, many form cooperatively. KaiA and CikA bind to the same region of the KaiB(fs) form and therefore compete.</text>
</comment>
<comment type="domain">
    <text evidence="1 2">The N-terminal pseudoreceiver domain (PsR, approximately equal to KaiA N-terminal) binds oxidized quinones (By similarity). The KaiA C-terminal domain mediates interaction with KaiC, homodimerization, and is responsible for the clock oscillation function (By similarity).</text>
</comment>
<comment type="sequence caution" evidence="6">
    <conflict type="frameshift">
        <sequence resource="EMBL-CDS" id="BAD21211"/>
    </conflict>
</comment>
<sequence>MVSKLSLYLVTPPGFQPGKIEAQLIGDRYQIKLLDYGQKFLAFLEANKEQIDCLVVVQGKENQDYFECLTQSGILLPCVFLGPTTACEISQEDVSEQLYHSAEKYLDFANLENLSLTIDQAIAQFLHLAPSCALSDKPQDPHHSDPDKTHQAFLLLQQRRLAEKLRERLGYLGVYYKRNPKYFYRSLSPEEQQEFREQFVADYRDIVLSYFSGDLPTNQAIDQFVNQAFFADVSVSYILETHMKLMDEFAQQLKLEGRSEEILLDYRLTLIDIVAHLCEMYRRSIPREDLPFELLFRID</sequence>